<proteinExistence type="evidence at protein level"/>
<comment type="function">
    <text evidence="1">Regulator of post-transcriptional mitochondrial gene expression, required for assembly of the mitochondrial ribosome and for recruitment of mRNA and lncRNA. Binds RNAs containing the 14 base G-rich element. Preferentially binds RNAs transcribed from three contiguous genes on the light strand of mtDNA, the ND6 mRNA, and the long non-coding RNAs for MT-CYB and MT-ND5, each of which contains multiple consensus binding sequences. Involved in the degradosome-mediated decay of non-coding mitochondrial transcripts (MT-ncRNA) and tRNA-like molecules. Acts by unwinding G-quadruplex RNA structures in MT-ncRNA, thus facilitating their degradation by the degradosome. G-quadruplexes (G4) are non-canonical 4 stranded structures formed by transcripts from the light strand of mtDNA.</text>
</comment>
<comment type="subunit">
    <text evidence="1">Monomer. Found in a complex with DDX28, DHX30, FASTKD2 and FASTKD5. Interacts with the mitochondrial RNase P complex subunit TRMT10C/MRPP1. Interacts with the 2 components of the mitochondrial degradosome complex, PNPT1 and SUPV3L1, in an RNA-dependent manner.</text>
</comment>
<comment type="subcellular location">
    <subcellularLocation>
        <location evidence="1">Mitochondrion matrix</location>
    </subcellularLocation>
    <text evidence="1">Localizes to mitochondrial RNA granules found in close proximity to the mitochondrial nucleoids.</text>
</comment>
<comment type="domain">
    <text evidence="1">The RRM domains mediate RNA-binding.</text>
</comment>
<reference key="1">
    <citation type="journal article" date="2005" name="Science">
        <title>The transcriptional landscape of the mammalian genome.</title>
        <authorList>
            <person name="Carninci P."/>
            <person name="Kasukawa T."/>
            <person name="Katayama S."/>
            <person name="Gough J."/>
            <person name="Frith M.C."/>
            <person name="Maeda N."/>
            <person name="Oyama R."/>
            <person name="Ravasi T."/>
            <person name="Lenhard B."/>
            <person name="Wells C."/>
            <person name="Kodzius R."/>
            <person name="Shimokawa K."/>
            <person name="Bajic V.B."/>
            <person name="Brenner S.E."/>
            <person name="Batalov S."/>
            <person name="Forrest A.R."/>
            <person name="Zavolan M."/>
            <person name="Davis M.J."/>
            <person name="Wilming L.G."/>
            <person name="Aidinis V."/>
            <person name="Allen J.E."/>
            <person name="Ambesi-Impiombato A."/>
            <person name="Apweiler R."/>
            <person name="Aturaliya R.N."/>
            <person name="Bailey T.L."/>
            <person name="Bansal M."/>
            <person name="Baxter L."/>
            <person name="Beisel K.W."/>
            <person name="Bersano T."/>
            <person name="Bono H."/>
            <person name="Chalk A.M."/>
            <person name="Chiu K.P."/>
            <person name="Choudhary V."/>
            <person name="Christoffels A."/>
            <person name="Clutterbuck D.R."/>
            <person name="Crowe M.L."/>
            <person name="Dalla E."/>
            <person name="Dalrymple B.P."/>
            <person name="de Bono B."/>
            <person name="Della Gatta G."/>
            <person name="di Bernardo D."/>
            <person name="Down T."/>
            <person name="Engstrom P."/>
            <person name="Fagiolini M."/>
            <person name="Faulkner G."/>
            <person name="Fletcher C.F."/>
            <person name="Fukushima T."/>
            <person name="Furuno M."/>
            <person name="Futaki S."/>
            <person name="Gariboldi M."/>
            <person name="Georgii-Hemming P."/>
            <person name="Gingeras T.R."/>
            <person name="Gojobori T."/>
            <person name="Green R.E."/>
            <person name="Gustincich S."/>
            <person name="Harbers M."/>
            <person name="Hayashi Y."/>
            <person name="Hensch T.K."/>
            <person name="Hirokawa N."/>
            <person name="Hill D."/>
            <person name="Huminiecki L."/>
            <person name="Iacono M."/>
            <person name="Ikeo K."/>
            <person name="Iwama A."/>
            <person name="Ishikawa T."/>
            <person name="Jakt M."/>
            <person name="Kanapin A."/>
            <person name="Katoh M."/>
            <person name="Kawasawa Y."/>
            <person name="Kelso J."/>
            <person name="Kitamura H."/>
            <person name="Kitano H."/>
            <person name="Kollias G."/>
            <person name="Krishnan S.P."/>
            <person name="Kruger A."/>
            <person name="Kummerfeld S.K."/>
            <person name="Kurochkin I.V."/>
            <person name="Lareau L.F."/>
            <person name="Lazarevic D."/>
            <person name="Lipovich L."/>
            <person name="Liu J."/>
            <person name="Liuni S."/>
            <person name="McWilliam S."/>
            <person name="Madan Babu M."/>
            <person name="Madera M."/>
            <person name="Marchionni L."/>
            <person name="Matsuda H."/>
            <person name="Matsuzawa S."/>
            <person name="Miki H."/>
            <person name="Mignone F."/>
            <person name="Miyake S."/>
            <person name="Morris K."/>
            <person name="Mottagui-Tabar S."/>
            <person name="Mulder N."/>
            <person name="Nakano N."/>
            <person name="Nakauchi H."/>
            <person name="Ng P."/>
            <person name="Nilsson R."/>
            <person name="Nishiguchi S."/>
            <person name="Nishikawa S."/>
            <person name="Nori F."/>
            <person name="Ohara O."/>
            <person name="Okazaki Y."/>
            <person name="Orlando V."/>
            <person name="Pang K.C."/>
            <person name="Pavan W.J."/>
            <person name="Pavesi G."/>
            <person name="Pesole G."/>
            <person name="Petrovsky N."/>
            <person name="Piazza S."/>
            <person name="Reed J."/>
            <person name="Reid J.F."/>
            <person name="Ring B.Z."/>
            <person name="Ringwald M."/>
            <person name="Rost B."/>
            <person name="Ruan Y."/>
            <person name="Salzberg S.L."/>
            <person name="Sandelin A."/>
            <person name="Schneider C."/>
            <person name="Schoenbach C."/>
            <person name="Sekiguchi K."/>
            <person name="Semple C.A."/>
            <person name="Seno S."/>
            <person name="Sessa L."/>
            <person name="Sheng Y."/>
            <person name="Shibata Y."/>
            <person name="Shimada H."/>
            <person name="Shimada K."/>
            <person name="Silva D."/>
            <person name="Sinclair B."/>
            <person name="Sperling S."/>
            <person name="Stupka E."/>
            <person name="Sugiura K."/>
            <person name="Sultana R."/>
            <person name="Takenaka Y."/>
            <person name="Taki K."/>
            <person name="Tammoja K."/>
            <person name="Tan S.L."/>
            <person name="Tang S."/>
            <person name="Taylor M.S."/>
            <person name="Tegner J."/>
            <person name="Teichmann S.A."/>
            <person name="Ueda H.R."/>
            <person name="van Nimwegen E."/>
            <person name="Verardo R."/>
            <person name="Wei C.L."/>
            <person name="Yagi K."/>
            <person name="Yamanishi H."/>
            <person name="Zabarovsky E."/>
            <person name="Zhu S."/>
            <person name="Zimmer A."/>
            <person name="Hide W."/>
            <person name="Bult C."/>
            <person name="Grimmond S.M."/>
            <person name="Teasdale R.D."/>
            <person name="Liu E.T."/>
            <person name="Brusic V."/>
            <person name="Quackenbush J."/>
            <person name="Wahlestedt C."/>
            <person name="Mattick J.S."/>
            <person name="Hume D.A."/>
            <person name="Kai C."/>
            <person name="Sasaki D."/>
            <person name="Tomaru Y."/>
            <person name="Fukuda S."/>
            <person name="Kanamori-Katayama M."/>
            <person name="Suzuki M."/>
            <person name="Aoki J."/>
            <person name="Arakawa T."/>
            <person name="Iida J."/>
            <person name="Imamura K."/>
            <person name="Itoh M."/>
            <person name="Kato T."/>
            <person name="Kawaji H."/>
            <person name="Kawagashira N."/>
            <person name="Kawashima T."/>
            <person name="Kojima M."/>
            <person name="Kondo S."/>
            <person name="Konno H."/>
            <person name="Nakano K."/>
            <person name="Ninomiya N."/>
            <person name="Nishio T."/>
            <person name="Okada M."/>
            <person name="Plessy C."/>
            <person name="Shibata K."/>
            <person name="Shiraki T."/>
            <person name="Suzuki S."/>
            <person name="Tagami M."/>
            <person name="Waki K."/>
            <person name="Watahiki A."/>
            <person name="Okamura-Oho Y."/>
            <person name="Suzuki H."/>
            <person name="Kawai J."/>
            <person name="Hayashizaki Y."/>
        </authorList>
    </citation>
    <scope>NUCLEOTIDE SEQUENCE [LARGE SCALE MRNA]</scope>
    <source>
        <strain>C57BL/6J</strain>
        <tissue>Corpora quadrigemina</tissue>
        <tissue>Thymus</tissue>
    </source>
</reference>
<reference key="2">
    <citation type="journal article" date="2004" name="Mol. Cell. Proteomics">
        <title>Phosphoproteomic analysis of the developing mouse brain.</title>
        <authorList>
            <person name="Ballif B.A."/>
            <person name="Villen J."/>
            <person name="Beausoleil S.A."/>
            <person name="Schwartz D."/>
            <person name="Gygi S.P."/>
        </authorList>
    </citation>
    <scope>IDENTIFICATION BY MASS SPECTROMETRY [LARGE SCALE ANALYSIS]</scope>
    <source>
        <tissue>Embryonic brain</tissue>
    </source>
</reference>
<reference key="3">
    <citation type="journal article" date="2010" name="Cell">
        <title>A tissue-specific atlas of mouse protein phosphorylation and expression.</title>
        <authorList>
            <person name="Huttlin E.L."/>
            <person name="Jedrychowski M.P."/>
            <person name="Elias J.E."/>
            <person name="Goswami T."/>
            <person name="Rad R."/>
            <person name="Beausoleil S.A."/>
            <person name="Villen J."/>
            <person name="Haas W."/>
            <person name="Sowa M.E."/>
            <person name="Gygi S.P."/>
        </authorList>
    </citation>
    <scope>IDENTIFICATION BY MASS SPECTROMETRY [LARGE SCALE ANALYSIS]</scope>
    <source>
        <tissue>Brain</tissue>
        <tissue>Brown adipose tissue</tissue>
        <tissue>Heart</tissue>
        <tissue>Kidney</tissue>
        <tissue>Spleen</tissue>
        <tissue>Testis</tissue>
    </source>
</reference>
<protein>
    <recommendedName>
        <fullName>G-rich sequence factor 1</fullName>
        <shortName>GRSF-1</shortName>
    </recommendedName>
</protein>
<evidence type="ECO:0000250" key="1">
    <source>
        <dbReference type="UniProtKB" id="Q12849"/>
    </source>
</evidence>
<evidence type="ECO:0000255" key="2"/>
<evidence type="ECO:0000255" key="3">
    <source>
        <dbReference type="PROSITE-ProRule" id="PRU00176"/>
    </source>
</evidence>
<evidence type="ECO:0000305" key="4"/>
<gene>
    <name type="primary">Grsf1</name>
</gene>
<dbReference type="EMBL" id="AK044889">
    <property type="protein sequence ID" value="BAC32129.1"/>
    <property type="molecule type" value="mRNA"/>
</dbReference>
<dbReference type="EMBL" id="AK045986">
    <property type="protein sequence ID" value="BAC32561.1"/>
    <property type="molecule type" value="mRNA"/>
</dbReference>
<dbReference type="EMBL" id="AK077782">
    <property type="protein sequence ID" value="BAC37006.1"/>
    <property type="molecule type" value="mRNA"/>
</dbReference>
<dbReference type="CCDS" id="CCDS19404.1"/>
<dbReference type="RefSeq" id="NP_001091946.1">
    <property type="nucleotide sequence ID" value="NM_001098476.2"/>
</dbReference>
<dbReference type="RefSeq" id="NP_848815.2">
    <property type="nucleotide sequence ID" value="NM_178700.5"/>
</dbReference>
<dbReference type="SMR" id="Q8C5Q4"/>
<dbReference type="BioGRID" id="231118">
    <property type="interactions" value="16"/>
</dbReference>
<dbReference type="FunCoup" id="Q8C5Q4">
    <property type="interactions" value="2629"/>
</dbReference>
<dbReference type="IntAct" id="Q8C5Q4">
    <property type="interactions" value="1"/>
</dbReference>
<dbReference type="STRING" id="10090.ENSMUSP00000077972"/>
<dbReference type="GlyGen" id="Q8C5Q4">
    <property type="glycosylation" value="1 site, 1 O-linked glycan (1 site)"/>
</dbReference>
<dbReference type="iPTMnet" id="Q8C5Q4"/>
<dbReference type="PhosphoSitePlus" id="Q8C5Q4"/>
<dbReference type="SwissPalm" id="Q8C5Q4"/>
<dbReference type="PaxDb" id="10090-ENSMUSP00000077972"/>
<dbReference type="PeptideAtlas" id="Q8C5Q4"/>
<dbReference type="ProteomicsDB" id="271460"/>
<dbReference type="Pumba" id="Q8C5Q4"/>
<dbReference type="Antibodypedia" id="24367">
    <property type="antibodies" value="171 antibodies from 23 providers"/>
</dbReference>
<dbReference type="DNASU" id="231413"/>
<dbReference type="Ensembl" id="ENSMUST00000078945.12">
    <property type="protein sequence ID" value="ENSMUSP00000077972.6"/>
    <property type="gene ID" value="ENSMUSG00000044221.15"/>
</dbReference>
<dbReference type="GeneID" id="231413"/>
<dbReference type="KEGG" id="mmu:231413"/>
<dbReference type="UCSC" id="uc008yac.2">
    <property type="organism name" value="mouse"/>
</dbReference>
<dbReference type="AGR" id="MGI:106479"/>
<dbReference type="CTD" id="2926"/>
<dbReference type="MGI" id="MGI:106479">
    <property type="gene designation" value="Grsf1"/>
</dbReference>
<dbReference type="VEuPathDB" id="HostDB:ENSMUSG00000044221"/>
<dbReference type="eggNOG" id="KOG4211">
    <property type="taxonomic scope" value="Eukaryota"/>
</dbReference>
<dbReference type="GeneTree" id="ENSGT00940000158529"/>
<dbReference type="HOGENOM" id="CLU_032003_0_1_1"/>
<dbReference type="InParanoid" id="Q8C5Q4"/>
<dbReference type="OMA" id="WSCTAQD"/>
<dbReference type="OrthoDB" id="431068at2759"/>
<dbReference type="PhylomeDB" id="Q8C5Q4"/>
<dbReference type="TreeFam" id="TF316157"/>
<dbReference type="BioGRID-ORCS" id="231413">
    <property type="hits" value="3 hits in 77 CRISPR screens"/>
</dbReference>
<dbReference type="ChiTaRS" id="Grsf1">
    <property type="organism name" value="mouse"/>
</dbReference>
<dbReference type="PRO" id="PR:Q8C5Q4"/>
<dbReference type="Proteomes" id="UP000000589">
    <property type="component" value="Chromosome 5"/>
</dbReference>
<dbReference type="RNAct" id="Q8C5Q4">
    <property type="molecule type" value="protein"/>
</dbReference>
<dbReference type="Bgee" id="ENSMUSG00000044221">
    <property type="expression patterns" value="Expressed in primitive streak and 261 other cell types or tissues"/>
</dbReference>
<dbReference type="ExpressionAtlas" id="Q8C5Q4">
    <property type="expression patterns" value="baseline and differential"/>
</dbReference>
<dbReference type="GO" id="GO:0042645">
    <property type="term" value="C:mitochondrial nucleoid"/>
    <property type="evidence" value="ECO:0000250"/>
    <property type="project" value="UniProtKB"/>
</dbReference>
<dbReference type="GO" id="GO:0005739">
    <property type="term" value="C:mitochondrion"/>
    <property type="evidence" value="ECO:0007005"/>
    <property type="project" value="MGI"/>
</dbReference>
<dbReference type="GO" id="GO:0035770">
    <property type="term" value="C:ribonucleoprotein granule"/>
    <property type="evidence" value="ECO:0000250"/>
    <property type="project" value="UniProtKB"/>
</dbReference>
<dbReference type="GO" id="GO:0003729">
    <property type="term" value="F:mRNA binding"/>
    <property type="evidence" value="ECO:0007669"/>
    <property type="project" value="Ensembl"/>
</dbReference>
<dbReference type="GO" id="GO:0009952">
    <property type="term" value="P:anterior/posterior pattern specification"/>
    <property type="evidence" value="ECO:0000315"/>
    <property type="project" value="MGI"/>
</dbReference>
<dbReference type="GO" id="GO:0016331">
    <property type="term" value="P:morphogenesis of embryonic epithelium"/>
    <property type="evidence" value="ECO:0000315"/>
    <property type="project" value="MGI"/>
</dbReference>
<dbReference type="GO" id="GO:0006397">
    <property type="term" value="P:mRNA processing"/>
    <property type="evidence" value="ECO:0007669"/>
    <property type="project" value="UniProtKB-KW"/>
</dbReference>
<dbReference type="GO" id="GO:0000962">
    <property type="term" value="P:positive regulation of mitochondrial RNA catabolic process"/>
    <property type="evidence" value="ECO:0007669"/>
    <property type="project" value="Ensembl"/>
</dbReference>
<dbReference type="GO" id="GO:0008033">
    <property type="term" value="P:tRNA processing"/>
    <property type="evidence" value="ECO:0007669"/>
    <property type="project" value="UniProtKB-KW"/>
</dbReference>
<dbReference type="CDD" id="cd12730">
    <property type="entry name" value="RRM1_GRSF1"/>
    <property type="match status" value="1"/>
</dbReference>
<dbReference type="CDD" id="cd12505">
    <property type="entry name" value="RRM2_GRSF1"/>
    <property type="match status" value="1"/>
</dbReference>
<dbReference type="CDD" id="cd12733">
    <property type="entry name" value="RRM3_GRSF1"/>
    <property type="match status" value="1"/>
</dbReference>
<dbReference type="FunFam" id="3.30.70.330:FF:000279">
    <property type="entry name" value="G-rich RNA sequence binding factor 1"/>
    <property type="match status" value="1"/>
</dbReference>
<dbReference type="FunFam" id="3.30.70.330:FF:000071">
    <property type="entry name" value="heterogeneous nuclear ribonucleoprotein H isoform X1"/>
    <property type="match status" value="1"/>
</dbReference>
<dbReference type="FunFam" id="3.30.70.330:FF:000131">
    <property type="entry name" value="Heterogeneous nuclear ribonucleoprotein h3 isoform"/>
    <property type="match status" value="1"/>
</dbReference>
<dbReference type="Gene3D" id="3.30.70.330">
    <property type="match status" value="3"/>
</dbReference>
<dbReference type="InterPro" id="IPR050666">
    <property type="entry name" value="ESRP"/>
</dbReference>
<dbReference type="InterPro" id="IPR034424">
    <property type="entry name" value="GRSF-1_RRM2"/>
</dbReference>
<dbReference type="InterPro" id="IPR034425">
    <property type="entry name" value="GRSF1_RRM1"/>
</dbReference>
<dbReference type="InterPro" id="IPR034426">
    <property type="entry name" value="GRSF1_RRM3"/>
</dbReference>
<dbReference type="InterPro" id="IPR012677">
    <property type="entry name" value="Nucleotide-bd_a/b_plait_sf"/>
</dbReference>
<dbReference type="InterPro" id="IPR035979">
    <property type="entry name" value="RBD_domain_sf"/>
</dbReference>
<dbReference type="InterPro" id="IPR000504">
    <property type="entry name" value="RRM_dom"/>
</dbReference>
<dbReference type="PANTHER" id="PTHR13976">
    <property type="entry name" value="HETEROGENEOUS NUCLEAR RIBONUCLEOPROTEIN-RELATED"/>
    <property type="match status" value="1"/>
</dbReference>
<dbReference type="Pfam" id="PF00076">
    <property type="entry name" value="RRM_1"/>
    <property type="match status" value="1"/>
</dbReference>
<dbReference type="SMART" id="SM00360">
    <property type="entry name" value="RRM"/>
    <property type="match status" value="3"/>
</dbReference>
<dbReference type="SUPFAM" id="SSF54928">
    <property type="entry name" value="RNA-binding domain, RBD"/>
    <property type="match status" value="2"/>
</dbReference>
<dbReference type="PROSITE" id="PS50102">
    <property type="entry name" value="RRM"/>
    <property type="match status" value="3"/>
</dbReference>
<accession>Q8C5Q4</accession>
<accession>Q8BR05</accession>
<accession>Q8BRG7</accession>
<organism>
    <name type="scientific">Mus musculus</name>
    <name type="common">Mouse</name>
    <dbReference type="NCBI Taxonomy" id="10090"/>
    <lineage>
        <taxon>Eukaryota</taxon>
        <taxon>Metazoa</taxon>
        <taxon>Chordata</taxon>
        <taxon>Craniata</taxon>
        <taxon>Vertebrata</taxon>
        <taxon>Euteleostomi</taxon>
        <taxon>Mammalia</taxon>
        <taxon>Eutheria</taxon>
        <taxon>Euarchontoglires</taxon>
        <taxon>Glires</taxon>
        <taxon>Rodentia</taxon>
        <taxon>Myomorpha</taxon>
        <taxon>Muroidea</taxon>
        <taxon>Muridae</taxon>
        <taxon>Murinae</taxon>
        <taxon>Mus</taxon>
        <taxon>Mus</taxon>
    </lineage>
</organism>
<sequence length="479" mass="53076">MAGTRWVLGALLRGCGCNCSSCRRTGAACLPFYSAAGTFPSGVSGRRRLLLLLGAAAAAASQTRGLQLGPAAAGRLAGPIPARPSAAAAAAASYSALRAPLFPRSLAAAAGPARGYSQESKTTYLEDLPPLPEYELSPSKLGDEVDDVYLIRAQGLPWSCTVEDVLNFFSDCRIRNSENGIHFLLNRDGKRRGDALIEMESEQDVQKALEKHRMYMGQRYVEVYEINNEDVDALMKSLQVKPSPVLSDGVVRLRGLPYSCNEKDIVDFFAGLNIVDITFVMDYRGRRKTGEAYVQFEEPEMANQALLKHREEIGNRYIEIFPSRRNEVRTHVGSHKGKKMTSSPPTKYITEPEVVFEEHEVNEDIRPMTAFESDKEIELPKEMSEKLPEAVDFGTLPSLHFVHMRGLPFQANAQDIINFFAPLKPVRITMEYSSSGKATGEADVHFDTHEDAVAAMLKDRSHVQHRYIELFLNSCPKGK</sequence>
<keyword id="KW-0496">Mitochondrion</keyword>
<keyword id="KW-0507">mRNA processing</keyword>
<keyword id="KW-0597">Phosphoprotein</keyword>
<keyword id="KW-1185">Reference proteome</keyword>
<keyword id="KW-0677">Repeat</keyword>
<keyword id="KW-0694">RNA-binding</keyword>
<keyword id="KW-0809">Transit peptide</keyword>
<keyword id="KW-0819">tRNA processing</keyword>
<feature type="transit peptide" description="Mitochondrion" evidence="2">
    <location>
        <begin position="1"/>
        <end position="116"/>
    </location>
</feature>
<feature type="chain" id="PRO_0000081598" description="G-rich sequence factor 1">
    <location>
        <begin position="117"/>
        <end position="479"/>
    </location>
</feature>
<feature type="domain" description="RRM 1" evidence="3">
    <location>
        <begin position="149"/>
        <end position="245"/>
    </location>
</feature>
<feature type="domain" description="RRM 2" evidence="3">
    <location>
        <begin position="249"/>
        <end position="325"/>
    </location>
</feature>
<feature type="domain" description="RRM 3" evidence="3">
    <location>
        <begin position="400"/>
        <end position="479"/>
    </location>
</feature>
<feature type="modified residue" description="Phosphoserine" evidence="1">
    <location>
        <position position="243"/>
    </location>
</feature>
<feature type="modified residue" description="Phosphoserine" evidence="1">
    <location>
        <position position="334"/>
    </location>
</feature>
<feature type="sequence conflict" description="In Ref. 1; BAC37006." evidence="4" ref="1">
    <original>C</original>
    <variation>Y</variation>
    <location>
        <position position="15"/>
    </location>
</feature>
<feature type="sequence conflict" description="In Ref. 1; BAC37006." evidence="4" ref="1">
    <original>A</original>
    <variation>T</variation>
    <location>
        <position position="92"/>
    </location>
</feature>
<feature type="sequence conflict" description="In Ref. 1; BAC32561." evidence="4" ref="1">
    <original>S</original>
    <variation>C</variation>
    <location>
        <position position="93"/>
    </location>
</feature>
<feature type="sequence conflict" description="In Ref. 1; BAC37006." evidence="4" ref="1">
    <original>R</original>
    <variation>T</variation>
    <location>
        <position position="254"/>
    </location>
</feature>
<name>GRSF1_MOUSE</name>